<protein>
    <recommendedName>
        <fullName>Uncharacterized protein C18B11.08c</fullName>
    </recommendedName>
</protein>
<comment type="subcellular location">
    <subcellularLocation>
        <location evidence="2">Membrane</location>
        <topology evidence="2">Single-pass membrane protein</topology>
    </subcellularLocation>
</comment>
<proteinExistence type="predicted"/>
<accession>Q09714</accession>
<sequence length="95" mass="10295">MAPAELKRPDLIVPYKARVKANEEVGLSLVSTATCMAALFLRFKLIAWVAFILTFSNLLNANTSPSSSPTSMAFMGIAALVSTYLPQFLNTPNKT</sequence>
<gene>
    <name type="ORF">SPAC18B11.08c</name>
</gene>
<feature type="chain" id="PRO_0000116389" description="Uncharacterized protein C18B11.08c">
    <location>
        <begin position="1"/>
        <end position="95"/>
    </location>
</feature>
<feature type="transmembrane region" description="Helical" evidence="1">
    <location>
        <begin position="29"/>
        <end position="53"/>
    </location>
</feature>
<organism>
    <name type="scientific">Schizosaccharomyces pombe (strain 972 / ATCC 24843)</name>
    <name type="common">Fission yeast</name>
    <dbReference type="NCBI Taxonomy" id="284812"/>
    <lineage>
        <taxon>Eukaryota</taxon>
        <taxon>Fungi</taxon>
        <taxon>Dikarya</taxon>
        <taxon>Ascomycota</taxon>
        <taxon>Taphrinomycotina</taxon>
        <taxon>Schizosaccharomycetes</taxon>
        <taxon>Schizosaccharomycetales</taxon>
        <taxon>Schizosaccharomycetaceae</taxon>
        <taxon>Schizosaccharomyces</taxon>
    </lineage>
</organism>
<evidence type="ECO:0000255" key="1"/>
<evidence type="ECO:0000305" key="2"/>
<dbReference type="EMBL" id="CU329670">
    <property type="protein sequence ID" value="CAA90596.2"/>
    <property type="molecule type" value="Genomic_DNA"/>
</dbReference>
<dbReference type="PIR" id="T37906">
    <property type="entry name" value="S59846"/>
</dbReference>
<dbReference type="SMR" id="Q09714"/>
<dbReference type="BioGRID" id="279036">
    <property type="interactions" value="1"/>
</dbReference>
<dbReference type="STRING" id="284812.Q09714"/>
<dbReference type="iPTMnet" id="Q09714"/>
<dbReference type="PaxDb" id="4896-SPAC18B11.08c.1"/>
<dbReference type="EnsemblFungi" id="SPAC18B11.08c.1">
    <property type="protein sequence ID" value="SPAC18B11.08c.1:pep"/>
    <property type="gene ID" value="SPAC18B11.08c"/>
</dbReference>
<dbReference type="KEGG" id="spo:2542581"/>
<dbReference type="PomBase" id="SPAC18B11.08c"/>
<dbReference type="VEuPathDB" id="FungiDB:SPAC18B11.08c"/>
<dbReference type="HOGENOM" id="CLU_129456_0_0_1"/>
<dbReference type="InParanoid" id="Q09714"/>
<dbReference type="OMA" id="FLRIKFI"/>
<dbReference type="PRO" id="PR:Q09714"/>
<dbReference type="Proteomes" id="UP000002485">
    <property type="component" value="Chromosome I"/>
</dbReference>
<dbReference type="GO" id="GO:0160005">
    <property type="term" value="C:PAT complex"/>
    <property type="evidence" value="ECO:0000304"/>
    <property type="project" value="PomBase"/>
</dbReference>
<dbReference type="GO" id="GO:0044183">
    <property type="term" value="F:protein folding chaperone"/>
    <property type="evidence" value="ECO:0000255"/>
    <property type="project" value="PomBase"/>
</dbReference>
<dbReference type="GO" id="GO:0045048">
    <property type="term" value="P:protein insertion into ER membrane"/>
    <property type="evidence" value="ECO:0000255"/>
    <property type="project" value="PomBase"/>
</dbReference>
<dbReference type="InterPro" id="IPR005351">
    <property type="entry name" value="ASTER"/>
</dbReference>
<dbReference type="PANTHER" id="PTHR28038">
    <property type="entry name" value="ADL329WP"/>
    <property type="match status" value="1"/>
</dbReference>
<dbReference type="PANTHER" id="PTHR28038:SF1">
    <property type="entry name" value="ADL329WP"/>
    <property type="match status" value="1"/>
</dbReference>
<dbReference type="Pfam" id="PF03669">
    <property type="entry name" value="ASTER"/>
    <property type="match status" value="1"/>
</dbReference>
<name>YA38_SCHPO</name>
<keyword id="KW-0472">Membrane</keyword>
<keyword id="KW-1185">Reference proteome</keyword>
<keyword id="KW-0812">Transmembrane</keyword>
<keyword id="KW-1133">Transmembrane helix</keyword>
<reference key="1">
    <citation type="journal article" date="2002" name="Nature">
        <title>The genome sequence of Schizosaccharomyces pombe.</title>
        <authorList>
            <person name="Wood V."/>
            <person name="Gwilliam R."/>
            <person name="Rajandream M.A."/>
            <person name="Lyne M.H."/>
            <person name="Lyne R."/>
            <person name="Stewart A."/>
            <person name="Sgouros J.G."/>
            <person name="Peat N."/>
            <person name="Hayles J."/>
            <person name="Baker S.G."/>
            <person name="Basham D."/>
            <person name="Bowman S."/>
            <person name="Brooks K."/>
            <person name="Brown D."/>
            <person name="Brown S."/>
            <person name="Chillingworth T."/>
            <person name="Churcher C.M."/>
            <person name="Collins M."/>
            <person name="Connor R."/>
            <person name="Cronin A."/>
            <person name="Davis P."/>
            <person name="Feltwell T."/>
            <person name="Fraser A."/>
            <person name="Gentles S."/>
            <person name="Goble A."/>
            <person name="Hamlin N."/>
            <person name="Harris D.E."/>
            <person name="Hidalgo J."/>
            <person name="Hodgson G."/>
            <person name="Holroyd S."/>
            <person name="Hornsby T."/>
            <person name="Howarth S."/>
            <person name="Huckle E.J."/>
            <person name="Hunt S."/>
            <person name="Jagels K."/>
            <person name="James K.D."/>
            <person name="Jones L."/>
            <person name="Jones M."/>
            <person name="Leather S."/>
            <person name="McDonald S."/>
            <person name="McLean J."/>
            <person name="Mooney P."/>
            <person name="Moule S."/>
            <person name="Mungall K.L."/>
            <person name="Murphy L.D."/>
            <person name="Niblett D."/>
            <person name="Odell C."/>
            <person name="Oliver K."/>
            <person name="O'Neil S."/>
            <person name="Pearson D."/>
            <person name="Quail M.A."/>
            <person name="Rabbinowitsch E."/>
            <person name="Rutherford K.M."/>
            <person name="Rutter S."/>
            <person name="Saunders D."/>
            <person name="Seeger K."/>
            <person name="Sharp S."/>
            <person name="Skelton J."/>
            <person name="Simmonds M.N."/>
            <person name="Squares R."/>
            <person name="Squares S."/>
            <person name="Stevens K."/>
            <person name="Taylor K."/>
            <person name="Taylor R.G."/>
            <person name="Tivey A."/>
            <person name="Walsh S.V."/>
            <person name="Warren T."/>
            <person name="Whitehead S."/>
            <person name="Woodward J.R."/>
            <person name="Volckaert G."/>
            <person name="Aert R."/>
            <person name="Robben J."/>
            <person name="Grymonprez B."/>
            <person name="Weltjens I."/>
            <person name="Vanstreels E."/>
            <person name="Rieger M."/>
            <person name="Schaefer M."/>
            <person name="Mueller-Auer S."/>
            <person name="Gabel C."/>
            <person name="Fuchs M."/>
            <person name="Duesterhoeft A."/>
            <person name="Fritzc C."/>
            <person name="Holzer E."/>
            <person name="Moestl D."/>
            <person name="Hilbert H."/>
            <person name="Borzym K."/>
            <person name="Langer I."/>
            <person name="Beck A."/>
            <person name="Lehrach H."/>
            <person name="Reinhardt R."/>
            <person name="Pohl T.M."/>
            <person name="Eger P."/>
            <person name="Zimmermann W."/>
            <person name="Wedler H."/>
            <person name="Wambutt R."/>
            <person name="Purnelle B."/>
            <person name="Goffeau A."/>
            <person name="Cadieu E."/>
            <person name="Dreano S."/>
            <person name="Gloux S."/>
            <person name="Lelaure V."/>
            <person name="Mottier S."/>
            <person name="Galibert F."/>
            <person name="Aves S.J."/>
            <person name="Xiang Z."/>
            <person name="Hunt C."/>
            <person name="Moore K."/>
            <person name="Hurst S.M."/>
            <person name="Lucas M."/>
            <person name="Rochet M."/>
            <person name="Gaillardin C."/>
            <person name="Tallada V.A."/>
            <person name="Garzon A."/>
            <person name="Thode G."/>
            <person name="Daga R.R."/>
            <person name="Cruzado L."/>
            <person name="Jimenez J."/>
            <person name="Sanchez M."/>
            <person name="del Rey F."/>
            <person name="Benito J."/>
            <person name="Dominguez A."/>
            <person name="Revuelta J.L."/>
            <person name="Moreno S."/>
            <person name="Armstrong J."/>
            <person name="Forsburg S.L."/>
            <person name="Cerutti L."/>
            <person name="Lowe T."/>
            <person name="McCombie W.R."/>
            <person name="Paulsen I."/>
            <person name="Potashkin J."/>
            <person name="Shpakovski G.V."/>
            <person name="Ussery D."/>
            <person name="Barrell B.G."/>
            <person name="Nurse P."/>
        </authorList>
    </citation>
    <scope>NUCLEOTIDE SEQUENCE [LARGE SCALE GENOMIC DNA]</scope>
    <source>
        <strain>972 / ATCC 24843</strain>
    </source>
</reference>